<comment type="catalytic activity">
    <reaction evidence="3">
        <text>(R)-5-phosphomevalonate + ATP = (R)-5-diphosphomevalonate + ADP</text>
        <dbReference type="Rhea" id="RHEA:16341"/>
        <dbReference type="ChEBI" id="CHEBI:30616"/>
        <dbReference type="ChEBI" id="CHEBI:57557"/>
        <dbReference type="ChEBI" id="CHEBI:58146"/>
        <dbReference type="ChEBI" id="CHEBI:456216"/>
        <dbReference type="EC" id="2.7.4.2"/>
    </reaction>
</comment>
<comment type="biophysicochemical properties">
    <kinetics>
        <KM evidence="3">11.8 uM for (R)-5-phosphomevalonate</KM>
        <text evidence="3">kcat is 20.9 sec(-1) with (R)-5-phosphomevalonate.</text>
    </kinetics>
</comment>
<comment type="pathway">
    <text evidence="5">Isoprenoid biosynthesis; isopentenyl diphosphate biosynthesis via mevalonate pathway; isopentenyl diphosphate from (R)-mevalonate: step 2/3.</text>
</comment>
<comment type="subcellular location">
    <subcellularLocation>
        <location evidence="2">Peroxisome</location>
    </subcellularLocation>
</comment>
<comment type="alternative products">
    <event type="alternative splicing"/>
    <isoform>
        <id>Q9C6T1-1</id>
        <name>1</name>
        <sequence type="displayed"/>
    </isoform>
    <isoform>
        <id>Q9C6T1-2</id>
        <name>2</name>
        <sequence type="described" ref="VSP_058117 VSP_058118"/>
    </isoform>
</comment>
<comment type="similarity">
    <text evidence="5">Belongs to the GHMP kinase family. Mevalonate kinase subfamily.</text>
</comment>
<protein>
    <recommendedName>
        <fullName evidence="5">Phosphomevalonate kinase, peroxisomal</fullName>
        <ecNumber evidence="3">2.7.4.2</ecNumber>
    </recommendedName>
    <alternativeName>
        <fullName evidence="4">5-phosphomevalonate kinase</fullName>
        <shortName evidence="4">AtPMK</shortName>
    </alternativeName>
</protein>
<dbReference type="EC" id="2.7.4.2" evidence="3"/>
<dbReference type="EMBL" id="AC079041">
    <property type="protein sequence ID" value="AAG50716.1"/>
    <property type="molecule type" value="Genomic_DNA"/>
</dbReference>
<dbReference type="EMBL" id="CP002684">
    <property type="protein sequence ID" value="AEE31414.1"/>
    <property type="molecule type" value="Genomic_DNA"/>
</dbReference>
<dbReference type="EMBL" id="CP002684">
    <property type="protein sequence ID" value="AEE31415.1"/>
    <property type="molecule type" value="Genomic_DNA"/>
</dbReference>
<dbReference type="EMBL" id="AK175299">
    <property type="protein sequence ID" value="BAD43062.1"/>
    <property type="molecule type" value="mRNA"/>
</dbReference>
<dbReference type="EMBL" id="AK175308">
    <property type="protein sequence ID" value="BAD43071.1"/>
    <property type="molecule type" value="mRNA"/>
</dbReference>
<dbReference type="EMBL" id="AK175511">
    <property type="protein sequence ID" value="BAD43274.1"/>
    <property type="molecule type" value="mRNA"/>
</dbReference>
<dbReference type="EMBL" id="AK176723">
    <property type="protein sequence ID" value="BAD44486.1"/>
    <property type="molecule type" value="mRNA"/>
</dbReference>
<dbReference type="EMBL" id="AK176889">
    <property type="protein sequence ID" value="BAD44652.1"/>
    <property type="molecule type" value="mRNA"/>
</dbReference>
<dbReference type="EMBL" id="AK221797">
    <property type="protein sequence ID" value="BAD93949.1"/>
    <property type="molecule type" value="mRNA"/>
</dbReference>
<dbReference type="PIR" id="C86443">
    <property type="entry name" value="C86443"/>
</dbReference>
<dbReference type="RefSeq" id="NP_001185124.1">
    <molecule id="Q9C6T1-2"/>
    <property type="nucleotide sequence ID" value="NM_001198195.1"/>
</dbReference>
<dbReference type="RefSeq" id="NP_174473.1">
    <molecule id="Q9C6T1-1"/>
    <property type="nucleotide sequence ID" value="NM_102927.3"/>
</dbReference>
<dbReference type="FunCoup" id="Q9C6T1">
    <property type="interactions" value="804"/>
</dbReference>
<dbReference type="STRING" id="3702.Q9C6T1"/>
<dbReference type="GlyGen" id="Q9C6T1">
    <property type="glycosylation" value="1 site"/>
</dbReference>
<dbReference type="iPTMnet" id="Q9C6T1"/>
<dbReference type="PaxDb" id="3702-AT1G31910.1"/>
<dbReference type="ProteomicsDB" id="234854">
    <molecule id="Q9C6T1-1"/>
</dbReference>
<dbReference type="EnsemblPlants" id="AT1G31910.1">
    <molecule id="Q9C6T1-1"/>
    <property type="protein sequence ID" value="AT1G31910.1"/>
    <property type="gene ID" value="AT1G31910"/>
</dbReference>
<dbReference type="EnsemblPlants" id="AT1G31910.2">
    <molecule id="Q9C6T1-2"/>
    <property type="protein sequence ID" value="AT1G31910.2"/>
    <property type="gene ID" value="AT1G31910"/>
</dbReference>
<dbReference type="GeneID" id="840081"/>
<dbReference type="Gramene" id="AT1G31910.1">
    <molecule id="Q9C6T1-1"/>
    <property type="protein sequence ID" value="AT1G31910.1"/>
    <property type="gene ID" value="AT1G31910"/>
</dbReference>
<dbReference type="Gramene" id="AT1G31910.2">
    <molecule id="Q9C6T1-2"/>
    <property type="protein sequence ID" value="AT1G31910.2"/>
    <property type="gene ID" value="AT1G31910"/>
</dbReference>
<dbReference type="KEGG" id="ath:AT1G31910"/>
<dbReference type="Araport" id="AT1G31910"/>
<dbReference type="TAIR" id="AT1G31910"/>
<dbReference type="eggNOG" id="KOG4519">
    <property type="taxonomic scope" value="Eukaryota"/>
</dbReference>
<dbReference type="HOGENOM" id="CLU_022059_1_0_1"/>
<dbReference type="InParanoid" id="Q9C6T1"/>
<dbReference type="OMA" id="LVIHRTM"/>
<dbReference type="PhylomeDB" id="Q9C6T1"/>
<dbReference type="BioCyc" id="ARA:AT1G31910-MONOMER"/>
<dbReference type="UniPathway" id="UPA00057">
    <property type="reaction ID" value="UER00099"/>
</dbReference>
<dbReference type="PRO" id="PR:Q9C6T1"/>
<dbReference type="Proteomes" id="UP000006548">
    <property type="component" value="Chromosome 1"/>
</dbReference>
<dbReference type="ExpressionAtlas" id="Q9C6T1">
    <property type="expression patterns" value="baseline and differential"/>
</dbReference>
<dbReference type="GO" id="GO:0005777">
    <property type="term" value="C:peroxisome"/>
    <property type="evidence" value="ECO:0000314"/>
    <property type="project" value="UniProtKB"/>
</dbReference>
<dbReference type="GO" id="GO:0005524">
    <property type="term" value="F:ATP binding"/>
    <property type="evidence" value="ECO:0007669"/>
    <property type="project" value="UniProtKB-KW"/>
</dbReference>
<dbReference type="GO" id="GO:0004631">
    <property type="term" value="F:phosphomevalonate kinase activity"/>
    <property type="evidence" value="ECO:0000314"/>
    <property type="project" value="UniProtKB"/>
</dbReference>
<dbReference type="GO" id="GO:0019287">
    <property type="term" value="P:isopentenyl diphosphate biosynthetic process, mevalonate pathway"/>
    <property type="evidence" value="ECO:0000314"/>
    <property type="project" value="UniProtKB"/>
</dbReference>
<dbReference type="GO" id="GO:0016126">
    <property type="term" value="P:sterol biosynthetic process"/>
    <property type="evidence" value="ECO:0007669"/>
    <property type="project" value="UniProtKB-KW"/>
</dbReference>
<dbReference type="FunFam" id="3.30.230.10:FF:000069">
    <property type="entry name" value="Probable phosphomevalonate kinase"/>
    <property type="match status" value="1"/>
</dbReference>
<dbReference type="Gene3D" id="3.30.230.10">
    <property type="match status" value="1"/>
</dbReference>
<dbReference type="Gene3D" id="3.30.70.890">
    <property type="entry name" value="GHMP kinase, C-terminal domain"/>
    <property type="match status" value="1"/>
</dbReference>
<dbReference type="InterPro" id="IPR016005">
    <property type="entry name" value="Erg8"/>
</dbReference>
<dbReference type="InterPro" id="IPR013750">
    <property type="entry name" value="GHMP_kinase_C_dom"/>
</dbReference>
<dbReference type="InterPro" id="IPR036554">
    <property type="entry name" value="GHMP_kinase_C_sf"/>
</dbReference>
<dbReference type="InterPro" id="IPR006204">
    <property type="entry name" value="GHMP_kinase_N_dom"/>
</dbReference>
<dbReference type="InterPro" id="IPR035102">
    <property type="entry name" value="Phosphomevalonate_kinase"/>
</dbReference>
<dbReference type="InterPro" id="IPR020568">
    <property type="entry name" value="Ribosomal_Su5_D2-typ_SF"/>
</dbReference>
<dbReference type="InterPro" id="IPR014721">
    <property type="entry name" value="Ribsml_uS5_D2-typ_fold_subgr"/>
</dbReference>
<dbReference type="NCBIfam" id="TIGR01219">
    <property type="entry name" value="Pmev_kin_ERG8"/>
    <property type="match status" value="1"/>
</dbReference>
<dbReference type="PANTHER" id="PTHR31814">
    <property type="match status" value="1"/>
</dbReference>
<dbReference type="PANTHER" id="PTHR31814:SF2">
    <property type="entry name" value="PHOSPHOMEVALONATE KINASE"/>
    <property type="match status" value="1"/>
</dbReference>
<dbReference type="Pfam" id="PF08544">
    <property type="entry name" value="GHMP_kinases_C"/>
    <property type="match status" value="1"/>
</dbReference>
<dbReference type="Pfam" id="PF00288">
    <property type="entry name" value="GHMP_kinases_N"/>
    <property type="match status" value="1"/>
</dbReference>
<dbReference type="PIRSF" id="PIRSF017288">
    <property type="entry name" value="PMK_GHMP_euk"/>
    <property type="match status" value="1"/>
</dbReference>
<dbReference type="SUPFAM" id="SSF54211">
    <property type="entry name" value="Ribosomal protein S5 domain 2-like"/>
    <property type="match status" value="1"/>
</dbReference>
<organism>
    <name type="scientific">Arabidopsis thaliana</name>
    <name type="common">Mouse-ear cress</name>
    <dbReference type="NCBI Taxonomy" id="3702"/>
    <lineage>
        <taxon>Eukaryota</taxon>
        <taxon>Viridiplantae</taxon>
        <taxon>Streptophyta</taxon>
        <taxon>Embryophyta</taxon>
        <taxon>Tracheophyta</taxon>
        <taxon>Spermatophyta</taxon>
        <taxon>Magnoliopsida</taxon>
        <taxon>eudicotyledons</taxon>
        <taxon>Gunneridae</taxon>
        <taxon>Pentapetalae</taxon>
        <taxon>rosids</taxon>
        <taxon>malvids</taxon>
        <taxon>Brassicales</taxon>
        <taxon>Brassicaceae</taxon>
        <taxon>Camelineae</taxon>
        <taxon>Arabidopsis</taxon>
    </lineage>
</organism>
<name>PMK_ARATH</name>
<sequence>MAVVASAPGKVLMTGGYLVLEKPNAGLVLSTNARFYAIVKPINEEVKPESWAWKWTDVKLTSPQLSRESMYKLSLNHLTLQSVSASDSRNPFVEHAIQYAIAAAHLATEKDKESLHKLLLQGLDITILGSNDFYSYRNQIESAGLPLTPESLGTLAPFASITFNAAESNGANSKPEVAKTGLGSSAAMTTAVVAALLHYLGVVDLSDPCKEGKFGCSDLDVIHMIAQTSHCLAQGKVGSGFDVSCAVYGSQRYVRFSPEVLSFAQVAVTGLPLNEVIGTILKGKWDNKRTEFSLPPLMNLFLGEPGSGGSSTPSMVGAVKKWQMSDPEKARENWQNLSDANLELETKLNDLSKLAKDHWDVYLRVIKSCSVLTSEKWVLHATEPINEAIIKELLEAREAMLRIRILMRQMGEAASVPIEPESQTQLLDSTMSAEGVLLAGVPGAGGFDAIFAITLGDSGTKLTQAWSSHNVLALLVREDPHGVCLESGDPRTTCITSGVSSIHLE</sequence>
<proteinExistence type="evidence at protein level"/>
<gene>
    <name evidence="4" type="primary">PMK</name>
    <name evidence="7" type="ordered locus">At1g31910</name>
    <name evidence="8" type="ORF">F5M6.9</name>
</gene>
<accession>Q9C6T1</accession>
<accession>Q681V6</accession>
<accession>Q682Q9</accession>
<keyword id="KW-0007">Acetylation</keyword>
<keyword id="KW-0025">Alternative splicing</keyword>
<keyword id="KW-0067">ATP-binding</keyword>
<keyword id="KW-0418">Kinase</keyword>
<keyword id="KW-0444">Lipid biosynthesis</keyword>
<keyword id="KW-0443">Lipid metabolism</keyword>
<keyword id="KW-0547">Nucleotide-binding</keyword>
<keyword id="KW-0576">Peroxisome</keyword>
<keyword id="KW-1185">Reference proteome</keyword>
<keyword id="KW-0752">Steroid biosynthesis</keyword>
<keyword id="KW-0753">Steroid metabolism</keyword>
<keyword id="KW-0756">Sterol biosynthesis</keyword>
<keyword id="KW-1207">Sterol metabolism</keyword>
<keyword id="KW-0808">Transferase</keyword>
<reference key="1">
    <citation type="journal article" date="2000" name="Nature">
        <title>Sequence and analysis of chromosome 1 of the plant Arabidopsis thaliana.</title>
        <authorList>
            <person name="Theologis A."/>
            <person name="Ecker J.R."/>
            <person name="Palm C.J."/>
            <person name="Federspiel N.A."/>
            <person name="Kaul S."/>
            <person name="White O."/>
            <person name="Alonso J."/>
            <person name="Altafi H."/>
            <person name="Araujo R."/>
            <person name="Bowman C.L."/>
            <person name="Brooks S.Y."/>
            <person name="Buehler E."/>
            <person name="Chan A."/>
            <person name="Chao Q."/>
            <person name="Chen H."/>
            <person name="Cheuk R.F."/>
            <person name="Chin C.W."/>
            <person name="Chung M.K."/>
            <person name="Conn L."/>
            <person name="Conway A.B."/>
            <person name="Conway A.R."/>
            <person name="Creasy T.H."/>
            <person name="Dewar K."/>
            <person name="Dunn P."/>
            <person name="Etgu P."/>
            <person name="Feldblyum T.V."/>
            <person name="Feng J.-D."/>
            <person name="Fong B."/>
            <person name="Fujii C.Y."/>
            <person name="Gill J.E."/>
            <person name="Goldsmith A.D."/>
            <person name="Haas B."/>
            <person name="Hansen N.F."/>
            <person name="Hughes B."/>
            <person name="Huizar L."/>
            <person name="Hunter J.L."/>
            <person name="Jenkins J."/>
            <person name="Johnson-Hopson C."/>
            <person name="Khan S."/>
            <person name="Khaykin E."/>
            <person name="Kim C.J."/>
            <person name="Koo H.L."/>
            <person name="Kremenetskaia I."/>
            <person name="Kurtz D.B."/>
            <person name="Kwan A."/>
            <person name="Lam B."/>
            <person name="Langin-Hooper S."/>
            <person name="Lee A."/>
            <person name="Lee J.M."/>
            <person name="Lenz C.A."/>
            <person name="Li J.H."/>
            <person name="Li Y.-P."/>
            <person name="Lin X."/>
            <person name="Liu S.X."/>
            <person name="Liu Z.A."/>
            <person name="Luros J.S."/>
            <person name="Maiti R."/>
            <person name="Marziali A."/>
            <person name="Militscher J."/>
            <person name="Miranda M."/>
            <person name="Nguyen M."/>
            <person name="Nierman W.C."/>
            <person name="Osborne B.I."/>
            <person name="Pai G."/>
            <person name="Peterson J."/>
            <person name="Pham P.K."/>
            <person name="Rizzo M."/>
            <person name="Rooney T."/>
            <person name="Rowley D."/>
            <person name="Sakano H."/>
            <person name="Salzberg S.L."/>
            <person name="Schwartz J.R."/>
            <person name="Shinn P."/>
            <person name="Southwick A.M."/>
            <person name="Sun H."/>
            <person name="Tallon L.J."/>
            <person name="Tambunga G."/>
            <person name="Toriumi M.J."/>
            <person name="Town C.D."/>
            <person name="Utterback T."/>
            <person name="Van Aken S."/>
            <person name="Vaysberg M."/>
            <person name="Vysotskaia V.S."/>
            <person name="Walker M."/>
            <person name="Wu D."/>
            <person name="Yu G."/>
            <person name="Fraser C.M."/>
            <person name="Venter J.C."/>
            <person name="Davis R.W."/>
        </authorList>
    </citation>
    <scope>NUCLEOTIDE SEQUENCE [LARGE SCALE GENOMIC DNA]</scope>
    <source>
        <strain>cv. Columbia</strain>
    </source>
</reference>
<reference key="2">
    <citation type="journal article" date="2017" name="Plant J.">
        <title>Araport11: a complete reannotation of the Arabidopsis thaliana reference genome.</title>
        <authorList>
            <person name="Cheng C.Y."/>
            <person name="Krishnakumar V."/>
            <person name="Chan A.P."/>
            <person name="Thibaud-Nissen F."/>
            <person name="Schobel S."/>
            <person name="Town C.D."/>
        </authorList>
    </citation>
    <scope>GENOME REANNOTATION</scope>
    <source>
        <strain>cv. Columbia</strain>
    </source>
</reference>
<reference key="3">
    <citation type="submission" date="2004-09" db="EMBL/GenBank/DDBJ databases">
        <title>Large-scale analysis of RIKEN Arabidopsis full-length (RAFL) cDNAs.</title>
        <authorList>
            <person name="Totoki Y."/>
            <person name="Seki M."/>
            <person name="Ishida J."/>
            <person name="Nakajima M."/>
            <person name="Enju A."/>
            <person name="Kamiya A."/>
            <person name="Narusaka M."/>
            <person name="Shin-i T."/>
            <person name="Nakagawa M."/>
            <person name="Sakamoto N."/>
            <person name="Oishi K."/>
            <person name="Kohara Y."/>
            <person name="Kobayashi M."/>
            <person name="Toyoda A."/>
            <person name="Sakaki Y."/>
            <person name="Sakurai T."/>
            <person name="Iida K."/>
            <person name="Akiyama K."/>
            <person name="Satou M."/>
            <person name="Toyoda T."/>
            <person name="Konagaya A."/>
            <person name="Carninci P."/>
            <person name="Kawai J."/>
            <person name="Hayashizaki Y."/>
            <person name="Shinozaki K."/>
        </authorList>
    </citation>
    <scope>NUCLEOTIDE SEQUENCE [LARGE SCALE MRNA] (ISOFORMS 1 AND 2)</scope>
    <source>
        <strain>cv. Columbia</strain>
    </source>
</reference>
<reference key="4">
    <citation type="journal article" date="2011" name="Planta">
        <title>Peroxisomal localisation of the final steps of the mevalonic acid pathway in planta.</title>
        <authorList>
            <person name="Simkin A.J."/>
            <person name="Guirimand G."/>
            <person name="Papon N."/>
            <person name="Courdavault V."/>
            <person name="Thabet I."/>
            <person name="Ginis O."/>
            <person name="Bouzid S."/>
            <person name="Giglioli-Guivarc'h N."/>
            <person name="Clastre M."/>
        </authorList>
    </citation>
    <scope>SUBCELLULAR LOCATION</scope>
</reference>
<reference key="5">
    <citation type="journal article" date="2012" name="Mol. Cell. Proteomics">
        <title>Comparative large-scale characterisation of plant vs. mammal proteins reveals similar and idiosyncratic N-alpha acetylation features.</title>
        <authorList>
            <person name="Bienvenut W.V."/>
            <person name="Sumpton D."/>
            <person name="Martinez A."/>
            <person name="Lilla S."/>
            <person name="Espagne C."/>
            <person name="Meinnel T."/>
            <person name="Giglione C."/>
        </authorList>
    </citation>
    <scope>ACETYLATION [LARGE SCALE ANALYSIS] AT ALA-2</scope>
    <scope>CLEAVAGE OF INITIATOR METHIONINE [LARGE SCALE ANALYSIS]</scope>
    <scope>IDENTIFICATION BY MASS SPECTROMETRY [LARGE SCALE ANALYSIS]</scope>
</reference>
<reference key="6">
    <citation type="journal article" date="2013" name="Elife">
        <title>Discovery of a metabolic alternative to the classical mevalonate pathway.</title>
        <authorList>
            <person name="Dellas N."/>
            <person name="Thomas S.T."/>
            <person name="Manning G."/>
            <person name="Noel J.P."/>
        </authorList>
    </citation>
    <scope>CATALYTIC ACTIVITY</scope>
    <scope>BIOPHYSICOCHEMICAL PROPERTIES</scope>
</reference>
<feature type="initiator methionine" description="Removed" evidence="9">
    <location>
        <position position="1"/>
    </location>
</feature>
<feature type="chain" id="PRO_0000435609" description="Phosphomevalonate kinase, peroxisomal">
    <location>
        <begin position="2"/>
        <end position="505"/>
    </location>
</feature>
<feature type="short sequence motif" description="Peroxisomal targeting signal PTS2" evidence="6">
    <location>
        <begin position="57"/>
        <end position="65"/>
    </location>
</feature>
<feature type="binding site" evidence="1">
    <location>
        <begin position="177"/>
        <end position="187"/>
    </location>
    <ligand>
        <name>ATP</name>
        <dbReference type="ChEBI" id="CHEBI:30616"/>
    </ligand>
</feature>
<feature type="modified residue" description="N-acetylalanine" evidence="9">
    <location>
        <position position="2"/>
    </location>
</feature>
<feature type="splice variant" id="VSP_058117" description="In isoform 2.">
    <original>IEPESQTQLLDSTMSAEGVLLAGVPGAGGFDAI</original>
    <variation>NLNSIHDIRVPQIPHLEQIDFIIIDLEGPWNCR</variation>
    <location>
        <begin position="418"/>
        <end position="450"/>
    </location>
</feature>
<feature type="splice variant" id="VSP_058118" description="In isoform 2.">
    <location>
        <begin position="451"/>
        <end position="505"/>
    </location>
</feature>
<feature type="sequence conflict" description="In Ref. 3; BAD43274." evidence="5" ref="3">
    <original>E</original>
    <variation>G</variation>
    <location>
        <position position="44"/>
    </location>
</feature>
<feature type="sequence conflict" description="In Ref. 3; BAD43274." evidence="5" ref="3">
    <original>K</original>
    <variation>N</variation>
    <location>
        <position position="54"/>
    </location>
</feature>
<evidence type="ECO:0000255" key="1"/>
<evidence type="ECO:0000269" key="2">
    <source>
    </source>
</evidence>
<evidence type="ECO:0000269" key="3">
    <source>
    </source>
</evidence>
<evidence type="ECO:0000303" key="4">
    <source>
    </source>
</evidence>
<evidence type="ECO:0000305" key="5"/>
<evidence type="ECO:0000305" key="6">
    <source>
    </source>
</evidence>
<evidence type="ECO:0000312" key="7">
    <source>
        <dbReference type="Araport" id="AT1G31910"/>
    </source>
</evidence>
<evidence type="ECO:0000312" key="8">
    <source>
        <dbReference type="EMBL" id="AAG50716.1"/>
    </source>
</evidence>
<evidence type="ECO:0007744" key="9">
    <source>
    </source>
</evidence>